<accession>P43535</accession>
<accession>D6VTN9</accession>
<name>GCN20_YEAST</name>
<feature type="initiator methionine" description="Removed" evidence="12">
    <location>
        <position position="1"/>
    </location>
</feature>
<feature type="chain" id="PRO_0000093461" description="Protein GCN20">
    <location>
        <begin position="2"/>
        <end position="752"/>
    </location>
</feature>
<feature type="domain" description="ABC transporter 1" evidence="1">
    <location>
        <begin position="199"/>
        <end position="464"/>
    </location>
</feature>
<feature type="domain" description="ABC transporter 2" evidence="1">
    <location>
        <begin position="532"/>
        <end position="748"/>
    </location>
</feature>
<feature type="binding site" evidence="1">
    <location>
        <begin position="232"/>
        <end position="239"/>
    </location>
    <ligand>
        <name>ATP</name>
        <dbReference type="ChEBI" id="CHEBI:30616"/>
        <label>1</label>
    </ligand>
</feature>
<feature type="binding site" evidence="1">
    <location>
        <begin position="565"/>
        <end position="572"/>
    </location>
    <ligand>
        <name>ATP</name>
        <dbReference type="ChEBI" id="CHEBI:30616"/>
        <label>2</label>
    </ligand>
</feature>
<feature type="modified residue" description="N-acetylalanine" evidence="12">
    <location>
        <position position="2"/>
    </location>
</feature>
<protein>
    <recommendedName>
        <fullName evidence="9">Protein GCN20</fullName>
    </recommendedName>
    <alternativeName>
        <fullName evidence="11">General control non-derepressible protein 20</fullName>
    </alternativeName>
</protein>
<gene>
    <name evidence="11" type="primary">GCN20</name>
    <name type="ordered locus">YFR009W</name>
</gene>
<evidence type="ECO:0000255" key="1">
    <source>
        <dbReference type="PROSITE-ProRule" id="PRU00434"/>
    </source>
</evidence>
<evidence type="ECO:0000269" key="2">
    <source>
    </source>
</evidence>
<evidence type="ECO:0000269" key="3">
    <source>
    </source>
</evidence>
<evidence type="ECO:0000269" key="4">
    <source>
    </source>
</evidence>
<evidence type="ECO:0000269" key="5">
    <source>
    </source>
</evidence>
<evidence type="ECO:0000269" key="6">
    <source>
    </source>
</evidence>
<evidence type="ECO:0000269" key="7">
    <source>
    </source>
</evidence>
<evidence type="ECO:0000269" key="8">
    <source>
    </source>
</evidence>
<evidence type="ECO:0000303" key="9">
    <source>
    </source>
</evidence>
<evidence type="ECO:0000305" key="10"/>
<evidence type="ECO:0000312" key="11">
    <source>
        <dbReference type="SGD" id="S000001905"/>
    </source>
</evidence>
<evidence type="ECO:0007744" key="12">
    <source>
    </source>
</evidence>
<comment type="function">
    <text evidence="2 3 6 7 8">Acts as a positive activator of the GCN2 protein kinase activity in response to in response to low amino acid, carbon, or purine availability (PubMed:10733573, PubMed:7621831). Component of the GCN1-GCN20 complex that forms a complex with GCN2 on translating ribosomes; during this process, GCN20 helps GCN1 to act as a chaperone to facilitate delivery of uncharged tRNAs that enter the A site of ribosomes to the tRNA-binding domain of GCN2, and hence stimulating GCN2 kinase activity (PubMed:10775272, PubMed:15722345, PubMed:7621831, PubMed:9234705). Participates in gene-specific mRNA translation activation, such as the transcriptional activator GCN4, by promoting the GCN2-mediated phosphorylation of eukaryotic translation initiation factor 2 (eIF-2-alpha/SUI2) on 'Ser-52', and hence allowing GCN4-mediated reprogramming of amino acid biosynthetic gene expression to alleviate nutrient depletion (PubMed:15722345).</text>
</comment>
<comment type="subunit">
    <text evidence="3 4 6 7 8">Interacts (via N-terminus) with GCN1 (via C-terminus); this interaction stimulates GCN2 kinase activity in response to amino acid starvation (PubMed:11101534, PubMed:15722345, PubMed:7621831, PubMed:9234705). The GCN1-GCN20 complex interacts with GCN2 on translating ribosomes in amino acid-starved cells; this association stimulates GCN2 kinase activation by uncharged tRNAs, and hence allowing GCN4 translational activation and derepression of amino acid biosynthetic genes (PubMed:10775272, PubMed:11101534, PubMed:7621831, PubMed:9234705). Associates with ribosomes (PubMed:15722345, PubMed:7621831, PubMed:9234705).</text>
</comment>
<comment type="interaction">
    <interactant intactId="EBI-7423">
        <id>P43535</id>
    </interactant>
    <interactant intactId="EBI-7442">
        <id>P33892</id>
        <label>GCN1</label>
    </interactant>
    <organismsDiffer>false</organismsDiffer>
    <experiments>4</experiments>
</comment>
<comment type="disruption phenotype">
    <text evidence="2">Inhibits GCN4 derepression in amino acid or purine-starved cells (PubMed:10733573). Attenuates GCN4 derepression in glucose-starved cells (PubMed:10733573).</text>
</comment>
<comment type="miscellaneous">
    <text evidence="5">Present with 14600 molecules/cell in log phase SD medium.</text>
</comment>
<comment type="similarity">
    <text evidence="10">Belongs to the ABC transporter superfamily. ABCF family. EF3 subfamily.</text>
</comment>
<keyword id="KW-0007">Acetylation</keyword>
<keyword id="KW-0010">Activator</keyword>
<keyword id="KW-0067">ATP-binding</keyword>
<keyword id="KW-0547">Nucleotide-binding</keyword>
<keyword id="KW-1185">Reference proteome</keyword>
<keyword id="KW-0677">Repeat</keyword>
<keyword id="KW-0346">Stress response</keyword>
<keyword id="KW-0810">Translation regulation</keyword>
<proteinExistence type="evidence at protein level"/>
<sequence>MASIGSQVRKAASSIDPIVTDYAVGYFNHLSGITFDAVQSKQVDLSTEVQFVSDLLIDAGASKAKVKELSESILKQLTTQLKENEAKLELTGDTSKRLLDINVLKSHNSKSDINVSLSMLGVNGDIEHTGRKMETRVDLKKLAKAEQKIAKKVAKRNNKFVKYEASKLINDQKEEDYDSFFLQINPLEFGSSAGKSKDIHIDTFDLYVGDGQRILSNAQLTLSFGHRYGLVGQNGIGKSTLLRALSRRELNVPKHVSILHVEQELRGDDTKALQSVLDADVWRKQLLSEEAKINERLKEMDVLRQEFEEDSLEVKKLDNEREDLDNHLIQISDKLVDMESDKAEARAASILYGLGFSTEAQQQPTNSFSGGWRMRLSLARALFCQPDLLLLDEPSNMLDVPSIAYLAEYLKTYPNTVLTVSHDRAFLNEVATDIIYQHNERLDYYRGQDFDTFYTTKEERRKNAQREYDNQMVYRKHLQEFIDKYRYNAAKSQEAQSRIKKLEKLPVLEPPEQDKTIDFKFPECDKLSPPIIQLQDVSFGYDENNLLLKDVNLDVQMDSRIALVGANGCGKTTLLKIMMEQLRPLKGFVSRNPRLRIGYFTQHHVDSMDLTTSAVDWMSKSFPGKTDEEYRRHLGSFGITGTLGLQKMQLLSGGQKSRVAFAALCLNNPHILVLDEPSNHLDTTGLDALVEALKNFNGGVLMVSHDISVIDSVCKEIWVSEQGTVKRFEGTIYDYRDYILQSADAAGVVKKH</sequence>
<reference key="1">
    <citation type="journal article" date="1995" name="EMBO J.">
        <title>GCN20, a novel ATP binding cassette protein, and GCN1 reside in a complex that mediates activation of the eIF-2 alpha kinase GCN2 in amino acid-starved cells.</title>
        <authorList>
            <person name="Vazquez de Aldana C.R."/>
            <person name="Marton M.J."/>
            <person name="Hinnebusch A.G."/>
        </authorList>
    </citation>
    <scope>NUCLEOTIDE SEQUENCE [GENOMIC DNA]</scope>
    <scope>FUNCTION</scope>
    <scope>INTERACTION WITH GCN1</scope>
    <scope>ASSOCIATION WITH RIBOSOMES</scope>
</reference>
<reference key="2">
    <citation type="journal article" date="1995" name="Nat. Genet.">
        <title>Analysis of the nucleotide sequence of chromosome VI from Saccharomyces cerevisiae.</title>
        <authorList>
            <person name="Murakami Y."/>
            <person name="Naitou M."/>
            <person name="Hagiwara H."/>
            <person name="Shibata T."/>
            <person name="Ozawa M."/>
            <person name="Sasanuma S."/>
            <person name="Sasanuma M."/>
            <person name="Tsuchiya Y."/>
            <person name="Soeda E."/>
            <person name="Yokoyama K."/>
            <person name="Yamazaki M."/>
            <person name="Tashiro H."/>
            <person name="Eki T."/>
        </authorList>
    </citation>
    <scope>NUCLEOTIDE SEQUENCE [LARGE SCALE GENOMIC DNA]</scope>
    <source>
        <strain>ATCC 204508 / S288c</strain>
    </source>
</reference>
<reference key="3">
    <citation type="journal article" date="2014" name="G3 (Bethesda)">
        <title>The reference genome sequence of Saccharomyces cerevisiae: Then and now.</title>
        <authorList>
            <person name="Engel S.R."/>
            <person name="Dietrich F.S."/>
            <person name="Fisk D.G."/>
            <person name="Binkley G."/>
            <person name="Balakrishnan R."/>
            <person name="Costanzo M.C."/>
            <person name="Dwight S.S."/>
            <person name="Hitz B.C."/>
            <person name="Karra K."/>
            <person name="Nash R.S."/>
            <person name="Weng S."/>
            <person name="Wong E.D."/>
            <person name="Lloyd P."/>
            <person name="Skrzypek M.S."/>
            <person name="Miyasato S.R."/>
            <person name="Simison M."/>
            <person name="Cherry J.M."/>
        </authorList>
    </citation>
    <scope>GENOME REANNOTATION</scope>
    <source>
        <strain>ATCC 204508 / S288c</strain>
    </source>
</reference>
<reference key="4">
    <citation type="journal article" date="2007" name="Genome Res.">
        <title>Approaching a complete repository of sequence-verified protein-encoding clones for Saccharomyces cerevisiae.</title>
        <authorList>
            <person name="Hu Y."/>
            <person name="Rolfs A."/>
            <person name="Bhullar B."/>
            <person name="Murthy T.V.S."/>
            <person name="Zhu C."/>
            <person name="Berger M.F."/>
            <person name="Camargo A.A."/>
            <person name="Kelley F."/>
            <person name="McCarron S."/>
            <person name="Jepson D."/>
            <person name="Richardson A."/>
            <person name="Raphael J."/>
            <person name="Moreira D."/>
            <person name="Taycher E."/>
            <person name="Zuo D."/>
            <person name="Mohr S."/>
            <person name="Kane M.F."/>
            <person name="Williamson J."/>
            <person name="Simpson A.J.G."/>
            <person name="Bulyk M.L."/>
            <person name="Harlow E."/>
            <person name="Marsischky G."/>
            <person name="Kolodner R.D."/>
            <person name="LaBaer J."/>
        </authorList>
    </citation>
    <scope>NUCLEOTIDE SEQUENCE [GENOMIC DNA]</scope>
    <source>
        <strain>ATCC 204508 / S288c</strain>
    </source>
</reference>
<reference key="5">
    <citation type="journal article" date="1997" name="Mol. Cell. Biol.">
        <title>Evidence that GCN1 and GCN20, translational regulators of GCN4, function on elongating ribosomes in activation of eIF2alpha kinase GCN2.</title>
        <authorList>
            <person name="Marton M.J."/>
            <person name="Vazquez de Aldana C.R."/>
            <person name="Qiu H."/>
            <person name="Chakraburtty K."/>
            <person name="Hinnebusch A.G."/>
        </authorList>
    </citation>
    <scope>FUNCTION</scope>
    <scope>INTERACTION WITH GCN1</scope>
    <scope>ASSOCIATION WITH RIBOSOMES</scope>
</reference>
<reference key="6">
    <citation type="journal article" date="2000" name="EMBO J.">
        <title>Association of GCN1-GCN20 regulatory complex with the N-terminus of eIF2alpha kinase GCN2 is required for GCN2 activation.</title>
        <authorList>
            <person name="Garcia-Barrio M."/>
            <person name="Dong J."/>
            <person name="Ufano S."/>
            <person name="Hinnebusch A.G."/>
        </authorList>
    </citation>
    <scope>FUNCTION</scope>
    <scope>IDENTIFICATION IN A COMPLEX WITH GCN1 AND GCN2</scope>
</reference>
<reference key="7">
    <citation type="journal article" date="2000" name="EMBO J.">
        <title>Separate domains in GCN1 for binding protein kinase GCN2 and ribosomes are required for GCN2 activation in amino acid-starved cells.</title>
        <authorList>
            <person name="Sattlegger E."/>
            <person name="Hinnebusch A.G."/>
        </authorList>
    </citation>
    <scope>INTERACTION WITH GCN1</scope>
</reference>
<reference key="8">
    <citation type="journal article" date="2000" name="Mol. Cell. Biol.">
        <title>Glucose limitation induces GCN4 translation by activation of Gcn2 protein kinase.</title>
        <authorList>
            <person name="Yang R."/>
            <person name="Wek S.A."/>
            <person name="Wek R.C."/>
        </authorList>
    </citation>
    <scope>FUNCTION</scope>
    <scope>DISRUPTION PHENOTYPE</scope>
</reference>
<reference key="9">
    <citation type="journal article" date="2003" name="Nature">
        <title>Global analysis of protein expression in yeast.</title>
        <authorList>
            <person name="Ghaemmaghami S."/>
            <person name="Huh W.-K."/>
            <person name="Bower K."/>
            <person name="Howson R.W."/>
            <person name="Belle A."/>
            <person name="Dephoure N."/>
            <person name="O'Shea E.K."/>
            <person name="Weissman J.S."/>
        </authorList>
    </citation>
    <scope>LEVEL OF PROTEIN EXPRESSION [LARGE SCALE ANALYSIS]</scope>
</reference>
<reference key="10">
    <citation type="journal article" date="2005" name="J. Biol. Chem.">
        <title>Polyribosome binding by GCN1 is required for full activation of eukaryotic translation initiation factor 2{alpha} kinase GCN2 during amino acid starvation.</title>
        <authorList>
            <person name="Sattlegger E."/>
            <person name="Hinnebusch A.G."/>
        </authorList>
    </citation>
    <scope>FUNCTION</scope>
    <scope>INTERACTION WITH GCN1</scope>
    <scope>ASSOCIATION WITH RIBOSOMES</scope>
</reference>
<reference key="11">
    <citation type="journal article" date="2012" name="Proc. Natl. Acad. Sci. U.S.A.">
        <title>N-terminal acetylome analyses and functional insights of the N-terminal acetyltransferase NatB.</title>
        <authorList>
            <person name="Van Damme P."/>
            <person name="Lasa M."/>
            <person name="Polevoda B."/>
            <person name="Gazquez C."/>
            <person name="Elosegui-Artola A."/>
            <person name="Kim D.S."/>
            <person name="De Juan-Pardo E."/>
            <person name="Demeyer K."/>
            <person name="Hole K."/>
            <person name="Larrea E."/>
            <person name="Timmerman E."/>
            <person name="Prieto J."/>
            <person name="Arnesen T."/>
            <person name="Sherman F."/>
            <person name="Gevaert K."/>
            <person name="Aldabe R."/>
        </authorList>
    </citation>
    <scope>ACETYLATION [LARGE SCALE ANALYSIS] AT ALA-2</scope>
    <scope>CLEAVAGE OF INITIATOR METHIONINE [LARGE SCALE ANALYSIS]</scope>
    <scope>IDENTIFICATION BY MASS SPECTROMETRY [LARGE SCALE ANALYSIS]</scope>
</reference>
<organism>
    <name type="scientific">Saccharomyces cerevisiae (strain ATCC 204508 / S288c)</name>
    <name type="common">Baker's yeast</name>
    <dbReference type="NCBI Taxonomy" id="559292"/>
    <lineage>
        <taxon>Eukaryota</taxon>
        <taxon>Fungi</taxon>
        <taxon>Dikarya</taxon>
        <taxon>Ascomycota</taxon>
        <taxon>Saccharomycotina</taxon>
        <taxon>Saccharomycetes</taxon>
        <taxon>Saccharomycetales</taxon>
        <taxon>Saccharomycetaceae</taxon>
        <taxon>Saccharomyces</taxon>
    </lineage>
</organism>
<dbReference type="EMBL" id="U19971">
    <property type="protein sequence ID" value="AAA75444.1"/>
    <property type="molecule type" value="Genomic_DNA"/>
</dbReference>
<dbReference type="EMBL" id="D50617">
    <property type="protein sequence ID" value="BAA09248.1"/>
    <property type="molecule type" value="Genomic_DNA"/>
</dbReference>
<dbReference type="EMBL" id="AY723804">
    <property type="protein sequence ID" value="AAU09721.1"/>
    <property type="molecule type" value="Genomic_DNA"/>
</dbReference>
<dbReference type="EMBL" id="BK006940">
    <property type="protein sequence ID" value="DAA12449.1"/>
    <property type="molecule type" value="Genomic_DNA"/>
</dbReference>
<dbReference type="PIR" id="S56146">
    <property type="entry name" value="S56146"/>
</dbReference>
<dbReference type="RefSeq" id="NP_116664.1">
    <property type="nucleotide sequence ID" value="NM_001179974.1"/>
</dbReference>
<dbReference type="SMR" id="P43535"/>
<dbReference type="BioGRID" id="31159">
    <property type="interactions" value="370"/>
</dbReference>
<dbReference type="ComplexPortal" id="CPX-1808">
    <property type="entry name" value="GCN1-GCN20 complex"/>
</dbReference>
<dbReference type="DIP" id="DIP-2345N"/>
<dbReference type="FunCoup" id="P43535">
    <property type="interactions" value="1149"/>
</dbReference>
<dbReference type="IntAct" id="P43535">
    <property type="interactions" value="59"/>
</dbReference>
<dbReference type="MINT" id="P43535"/>
<dbReference type="STRING" id="4932.YFR009W"/>
<dbReference type="iPTMnet" id="P43535"/>
<dbReference type="PaxDb" id="4932-YFR009W"/>
<dbReference type="PeptideAtlas" id="P43535"/>
<dbReference type="EnsemblFungi" id="YFR009W_mRNA">
    <property type="protein sequence ID" value="YFR009W"/>
    <property type="gene ID" value="YFR009W"/>
</dbReference>
<dbReference type="GeneID" id="850561"/>
<dbReference type="KEGG" id="sce:YFR009W"/>
<dbReference type="AGR" id="SGD:S000001905"/>
<dbReference type="SGD" id="S000001905">
    <property type="gene designation" value="GCN20"/>
</dbReference>
<dbReference type="VEuPathDB" id="FungiDB:YFR009W"/>
<dbReference type="eggNOG" id="KOG0062">
    <property type="taxonomic scope" value="Eukaryota"/>
</dbReference>
<dbReference type="GeneTree" id="ENSGT00940000155604"/>
<dbReference type="HOGENOM" id="CLU_000604_36_6_1"/>
<dbReference type="InParanoid" id="P43535"/>
<dbReference type="OMA" id="CTHIADI"/>
<dbReference type="OrthoDB" id="2110130at2759"/>
<dbReference type="BioCyc" id="YEAST:G3O-30462-MONOMER"/>
<dbReference type="BioGRID-ORCS" id="850561">
    <property type="hits" value="1 hit in 10 CRISPR screens"/>
</dbReference>
<dbReference type="CD-CODE" id="E03F929F">
    <property type="entry name" value="Stress granule"/>
</dbReference>
<dbReference type="PRO" id="PR:P43535"/>
<dbReference type="Proteomes" id="UP000002311">
    <property type="component" value="Chromosome VI"/>
</dbReference>
<dbReference type="RNAct" id="P43535">
    <property type="molecule type" value="protein"/>
</dbReference>
<dbReference type="GO" id="GO:0022626">
    <property type="term" value="C:cytosolic ribosome"/>
    <property type="evidence" value="ECO:0000314"/>
    <property type="project" value="SGD"/>
</dbReference>
<dbReference type="GO" id="GO:0005524">
    <property type="term" value="F:ATP binding"/>
    <property type="evidence" value="ECO:0000318"/>
    <property type="project" value="GO_Central"/>
</dbReference>
<dbReference type="GO" id="GO:0016887">
    <property type="term" value="F:ATP hydrolysis activity"/>
    <property type="evidence" value="ECO:0000250"/>
    <property type="project" value="SGD"/>
</dbReference>
<dbReference type="GO" id="GO:0043022">
    <property type="term" value="F:ribosome binding"/>
    <property type="evidence" value="ECO:0000314"/>
    <property type="project" value="UniProtKB"/>
</dbReference>
<dbReference type="GO" id="GO:0031369">
    <property type="term" value="F:translation initiation factor binding"/>
    <property type="evidence" value="ECO:0000353"/>
    <property type="project" value="UniProtKB"/>
</dbReference>
<dbReference type="GO" id="GO:0071232">
    <property type="term" value="P:cellular response to histidine"/>
    <property type="evidence" value="ECO:0000314"/>
    <property type="project" value="UniProtKB"/>
</dbReference>
<dbReference type="GO" id="GO:0042327">
    <property type="term" value="P:positive regulation of phosphorylation"/>
    <property type="evidence" value="ECO:0000315"/>
    <property type="project" value="UniProtKB"/>
</dbReference>
<dbReference type="GO" id="GO:0071264">
    <property type="term" value="P:positive regulation of translational initiation in response to starvation"/>
    <property type="evidence" value="ECO:0000314"/>
    <property type="project" value="UniProtKB"/>
</dbReference>
<dbReference type="GO" id="GO:0043335">
    <property type="term" value="P:protein unfolding"/>
    <property type="evidence" value="ECO:0000315"/>
    <property type="project" value="SGD"/>
</dbReference>
<dbReference type="GO" id="GO:0006448">
    <property type="term" value="P:regulation of translational elongation"/>
    <property type="evidence" value="ECO:0000315"/>
    <property type="project" value="SGD"/>
</dbReference>
<dbReference type="CDD" id="cd03221">
    <property type="entry name" value="ABCF_EF-3"/>
    <property type="match status" value="2"/>
</dbReference>
<dbReference type="FunFam" id="3.40.50.300:FF:000104">
    <property type="entry name" value="ATP-binding cassette sub-family F member 3"/>
    <property type="match status" value="1"/>
</dbReference>
<dbReference type="FunFam" id="3.40.50.300:FF:000882">
    <property type="entry name" value="Translation initiation regulator (Gcn20)"/>
    <property type="match status" value="1"/>
</dbReference>
<dbReference type="Gene3D" id="3.40.50.300">
    <property type="entry name" value="P-loop containing nucleotide triphosphate hydrolases"/>
    <property type="match status" value="2"/>
</dbReference>
<dbReference type="InterPro" id="IPR003593">
    <property type="entry name" value="AAA+_ATPase"/>
</dbReference>
<dbReference type="InterPro" id="IPR032781">
    <property type="entry name" value="ABC_tran_Xtn"/>
</dbReference>
<dbReference type="InterPro" id="IPR003439">
    <property type="entry name" value="ABC_transporter-like_ATP-bd"/>
</dbReference>
<dbReference type="InterPro" id="IPR017871">
    <property type="entry name" value="ABC_transporter-like_CS"/>
</dbReference>
<dbReference type="InterPro" id="IPR050611">
    <property type="entry name" value="ABCF_EF3_subfamily"/>
</dbReference>
<dbReference type="InterPro" id="IPR027417">
    <property type="entry name" value="P-loop_NTPase"/>
</dbReference>
<dbReference type="PANTHER" id="PTHR19211:SF117">
    <property type="entry name" value="ATP-BINDING CASSETTE SUB-FAMILY F MEMBER 3"/>
    <property type="match status" value="1"/>
</dbReference>
<dbReference type="PANTHER" id="PTHR19211">
    <property type="entry name" value="ATP-BINDING TRANSPORT PROTEIN-RELATED"/>
    <property type="match status" value="1"/>
</dbReference>
<dbReference type="Pfam" id="PF00005">
    <property type="entry name" value="ABC_tran"/>
    <property type="match status" value="2"/>
</dbReference>
<dbReference type="Pfam" id="PF12848">
    <property type="entry name" value="ABC_tran_Xtn"/>
    <property type="match status" value="1"/>
</dbReference>
<dbReference type="SMART" id="SM00382">
    <property type="entry name" value="AAA"/>
    <property type="match status" value="2"/>
</dbReference>
<dbReference type="SUPFAM" id="SSF52540">
    <property type="entry name" value="P-loop containing nucleoside triphosphate hydrolases"/>
    <property type="match status" value="2"/>
</dbReference>
<dbReference type="PROSITE" id="PS00211">
    <property type="entry name" value="ABC_TRANSPORTER_1"/>
    <property type="match status" value="1"/>
</dbReference>
<dbReference type="PROSITE" id="PS50893">
    <property type="entry name" value="ABC_TRANSPORTER_2"/>
    <property type="match status" value="2"/>
</dbReference>